<feature type="chain" id="PRO_0000334777" description="Leucine--tRNA ligase">
    <location>
        <begin position="1"/>
        <end position="950"/>
    </location>
</feature>
<feature type="short sequence motif" description="'HIGH' region">
    <location>
        <begin position="72"/>
        <end position="83"/>
    </location>
</feature>
<feature type="short sequence motif" description="'KMSKS' region">
    <location>
        <begin position="722"/>
        <end position="726"/>
    </location>
</feature>
<feature type="binding site" evidence="1">
    <location>
        <position position="725"/>
    </location>
    <ligand>
        <name>ATP</name>
        <dbReference type="ChEBI" id="CHEBI:30616"/>
    </ligand>
</feature>
<proteinExistence type="inferred from homology"/>
<organism>
    <name type="scientific">Mycobacterium sp. (strain KMS)</name>
    <dbReference type="NCBI Taxonomy" id="189918"/>
    <lineage>
        <taxon>Bacteria</taxon>
        <taxon>Bacillati</taxon>
        <taxon>Actinomycetota</taxon>
        <taxon>Actinomycetes</taxon>
        <taxon>Mycobacteriales</taxon>
        <taxon>Mycobacteriaceae</taxon>
        <taxon>Mycobacterium</taxon>
    </lineage>
</organism>
<sequence length="950" mass="105595">MTETPTAQPDRAADADTPQHRYTAELAGQIEGAWQQTWAVEGTFNVPNPVGELAPPDGTVPADKMFVQDMFPYPSGEGLHVGHPLGYIATDVYARYYRMTGRNVLHALGFDAFGLPAEQYAVQTGTHPRTRTEANIVNFRRQLGRLGLGHDTRRSFSTTDVDFYTWTQWIFLQIYNAWFDRDANRARPIAELIGEFESGVRTLDDGRPWSELSAGERADVVDSYRLVYRADSMVNWCPGLGTVLANEEVTADGRSDRGNFPVFRKRLRQWMMRITAYSDRLLEDLEVLDWPDKVKTMQRNWIGRSTGASVQFGTDAGDIEVFTTRPDTLFGATYLVLAPEHPLVEQLAAEQWPDDVDGRWTFGATTPREAVAAYRASIAAKSDLERQENKTKTGAFLGAYATNPANGQQVPIFIADYVLIGYGTGAIMAVPGHDQRDWEFAHEFGLPVVEVISGGDISEAAYAGDGLLVNSDYLDGLDVAAAKAAITDRLVADGRGRARVEYKLRDWLFARQRYWGEPFPIVYDSDGRPHPLPESALPVELPDVPDYSPVLFDPDDADSEPNPPLNKATDWVHVELDLGDGLQTYTRDTNVMPQWAGSSWYELRYTDPLNKEALCAKENEAYWMGPQPAEHGPDDPGGVDLYVGGVEHAVLHLLYSRFWHKVLYDLGHVSSREPYRRLVNQGYIQAFAYTDSRGSYVPAAEVVERDGKFWFEGAEVFQEFGKIGKSLKNSVSPDEICDNYGADTLRVYEMSMGPLEASRPWATKDVVGAHRFLQRVWRLVVDEQSGAVRVANHEALDTDTLRALHRTVAGVSEDYAALRNNTAAAKLIEYTNHLTKEGVTARAAIEPLVLMVAPLAPHLAEELWRRLGHDTSLAHGPFPVADPQYLVTDTVEYPVQVNGKVRSRITVDADAGKDTLEAAALADEKVQAFLNGATPKKVIVVPGRLVNLVV</sequence>
<accession>A1UPA5</accession>
<protein>
    <recommendedName>
        <fullName evidence="1">Leucine--tRNA ligase</fullName>
        <ecNumber evidence="1">6.1.1.4</ecNumber>
    </recommendedName>
    <alternativeName>
        <fullName evidence="1">Leucyl-tRNA synthetase</fullName>
        <shortName evidence="1">LeuRS</shortName>
    </alternativeName>
</protein>
<comment type="catalytic activity">
    <reaction evidence="1">
        <text>tRNA(Leu) + L-leucine + ATP = L-leucyl-tRNA(Leu) + AMP + diphosphate</text>
        <dbReference type="Rhea" id="RHEA:11688"/>
        <dbReference type="Rhea" id="RHEA-COMP:9613"/>
        <dbReference type="Rhea" id="RHEA-COMP:9622"/>
        <dbReference type="ChEBI" id="CHEBI:30616"/>
        <dbReference type="ChEBI" id="CHEBI:33019"/>
        <dbReference type="ChEBI" id="CHEBI:57427"/>
        <dbReference type="ChEBI" id="CHEBI:78442"/>
        <dbReference type="ChEBI" id="CHEBI:78494"/>
        <dbReference type="ChEBI" id="CHEBI:456215"/>
        <dbReference type="EC" id="6.1.1.4"/>
    </reaction>
</comment>
<comment type="subcellular location">
    <subcellularLocation>
        <location evidence="1">Cytoplasm</location>
    </subcellularLocation>
</comment>
<comment type="similarity">
    <text evidence="1">Belongs to the class-I aminoacyl-tRNA synthetase family.</text>
</comment>
<comment type="sequence caution" evidence="2">
    <conflict type="erroneous initiation">
        <sequence resource="EMBL-CDS" id="ABL94663"/>
    </conflict>
</comment>
<evidence type="ECO:0000255" key="1">
    <source>
        <dbReference type="HAMAP-Rule" id="MF_00049"/>
    </source>
</evidence>
<evidence type="ECO:0000305" key="2"/>
<keyword id="KW-0030">Aminoacyl-tRNA synthetase</keyword>
<keyword id="KW-0067">ATP-binding</keyword>
<keyword id="KW-0963">Cytoplasm</keyword>
<keyword id="KW-0436">Ligase</keyword>
<keyword id="KW-0547">Nucleotide-binding</keyword>
<keyword id="KW-0648">Protein biosynthesis</keyword>
<dbReference type="EC" id="6.1.1.4" evidence="1"/>
<dbReference type="EMBL" id="CP000518">
    <property type="protein sequence ID" value="ABL94663.1"/>
    <property type="status" value="ALT_INIT"/>
    <property type="molecule type" value="Genomic_DNA"/>
</dbReference>
<dbReference type="SMR" id="A1UPA5"/>
<dbReference type="STRING" id="189918.Mkms_5478"/>
<dbReference type="KEGG" id="mkm:Mkms_5478"/>
<dbReference type="HOGENOM" id="CLU_004427_0_0_11"/>
<dbReference type="OrthoDB" id="9810365at2"/>
<dbReference type="GO" id="GO:0005829">
    <property type="term" value="C:cytosol"/>
    <property type="evidence" value="ECO:0007669"/>
    <property type="project" value="TreeGrafter"/>
</dbReference>
<dbReference type="GO" id="GO:0002161">
    <property type="term" value="F:aminoacyl-tRNA deacylase activity"/>
    <property type="evidence" value="ECO:0007669"/>
    <property type="project" value="InterPro"/>
</dbReference>
<dbReference type="GO" id="GO:0005524">
    <property type="term" value="F:ATP binding"/>
    <property type="evidence" value="ECO:0007669"/>
    <property type="project" value="UniProtKB-UniRule"/>
</dbReference>
<dbReference type="GO" id="GO:0004823">
    <property type="term" value="F:leucine-tRNA ligase activity"/>
    <property type="evidence" value="ECO:0007669"/>
    <property type="project" value="UniProtKB-UniRule"/>
</dbReference>
<dbReference type="GO" id="GO:0006429">
    <property type="term" value="P:leucyl-tRNA aminoacylation"/>
    <property type="evidence" value="ECO:0007669"/>
    <property type="project" value="UniProtKB-UniRule"/>
</dbReference>
<dbReference type="CDD" id="cd07958">
    <property type="entry name" value="Anticodon_Ia_Leu_BEm"/>
    <property type="match status" value="1"/>
</dbReference>
<dbReference type="FunFam" id="3.10.20.590:FF:000001">
    <property type="entry name" value="Leucine--tRNA ligase"/>
    <property type="match status" value="1"/>
</dbReference>
<dbReference type="FunFam" id="3.40.50.620:FF:000060">
    <property type="entry name" value="Leucine--tRNA ligase"/>
    <property type="match status" value="1"/>
</dbReference>
<dbReference type="FunFam" id="3.40.50.620:FF:000087">
    <property type="entry name" value="Leucine--tRNA ligase"/>
    <property type="match status" value="1"/>
</dbReference>
<dbReference type="FunFam" id="3.90.740.10:FF:000017">
    <property type="entry name" value="Leucine--tRNA ligase"/>
    <property type="match status" value="1"/>
</dbReference>
<dbReference type="FunFam" id="1.10.730.10:FF:000011">
    <property type="entry name" value="Leucine--tRNA ligase chloroplastic/mitochondrial"/>
    <property type="match status" value="1"/>
</dbReference>
<dbReference type="Gene3D" id="3.40.50.620">
    <property type="entry name" value="HUPs"/>
    <property type="match status" value="2"/>
</dbReference>
<dbReference type="Gene3D" id="1.10.730.10">
    <property type="entry name" value="Isoleucyl-tRNA Synthetase, Domain 1"/>
    <property type="match status" value="2"/>
</dbReference>
<dbReference type="Gene3D" id="3.90.740.10">
    <property type="entry name" value="Valyl/Leucyl/Isoleucyl-tRNA synthetase, editing domain"/>
    <property type="match status" value="1"/>
</dbReference>
<dbReference type="HAMAP" id="MF_00049_B">
    <property type="entry name" value="Leu_tRNA_synth_B"/>
    <property type="match status" value="1"/>
</dbReference>
<dbReference type="InterPro" id="IPR001412">
    <property type="entry name" value="aa-tRNA-synth_I_CS"/>
</dbReference>
<dbReference type="InterPro" id="IPR002302">
    <property type="entry name" value="Leu-tRNA-ligase"/>
</dbReference>
<dbReference type="InterPro" id="IPR025709">
    <property type="entry name" value="Leu_tRNA-synth_edit"/>
</dbReference>
<dbReference type="InterPro" id="IPR013155">
    <property type="entry name" value="M/V/L/I-tRNA-synth_anticd-bd"/>
</dbReference>
<dbReference type="InterPro" id="IPR015413">
    <property type="entry name" value="Methionyl/Leucyl_tRNA_Synth"/>
</dbReference>
<dbReference type="InterPro" id="IPR014729">
    <property type="entry name" value="Rossmann-like_a/b/a_fold"/>
</dbReference>
<dbReference type="InterPro" id="IPR009080">
    <property type="entry name" value="tRNAsynth_Ia_anticodon-bd"/>
</dbReference>
<dbReference type="InterPro" id="IPR009008">
    <property type="entry name" value="Val/Leu/Ile-tRNA-synth_edit"/>
</dbReference>
<dbReference type="NCBIfam" id="TIGR00396">
    <property type="entry name" value="leuS_bact"/>
    <property type="match status" value="1"/>
</dbReference>
<dbReference type="PANTHER" id="PTHR43740:SF2">
    <property type="entry name" value="LEUCINE--TRNA LIGASE, MITOCHONDRIAL"/>
    <property type="match status" value="1"/>
</dbReference>
<dbReference type="PANTHER" id="PTHR43740">
    <property type="entry name" value="LEUCYL-TRNA SYNTHETASE"/>
    <property type="match status" value="1"/>
</dbReference>
<dbReference type="Pfam" id="PF08264">
    <property type="entry name" value="Anticodon_1"/>
    <property type="match status" value="1"/>
</dbReference>
<dbReference type="Pfam" id="PF13603">
    <property type="entry name" value="tRNA-synt_1_2"/>
    <property type="match status" value="1"/>
</dbReference>
<dbReference type="Pfam" id="PF09334">
    <property type="entry name" value="tRNA-synt_1g"/>
    <property type="match status" value="1"/>
</dbReference>
<dbReference type="PRINTS" id="PR00985">
    <property type="entry name" value="TRNASYNTHLEU"/>
</dbReference>
<dbReference type="SUPFAM" id="SSF47323">
    <property type="entry name" value="Anticodon-binding domain of a subclass of class I aminoacyl-tRNA synthetases"/>
    <property type="match status" value="1"/>
</dbReference>
<dbReference type="SUPFAM" id="SSF52374">
    <property type="entry name" value="Nucleotidylyl transferase"/>
    <property type="match status" value="1"/>
</dbReference>
<dbReference type="SUPFAM" id="SSF50677">
    <property type="entry name" value="ValRS/IleRS/LeuRS editing domain"/>
    <property type="match status" value="1"/>
</dbReference>
<dbReference type="PROSITE" id="PS00178">
    <property type="entry name" value="AA_TRNA_LIGASE_I"/>
    <property type="match status" value="1"/>
</dbReference>
<gene>
    <name evidence="1" type="primary">leuS</name>
    <name type="ordered locus">Mkms_5478</name>
</gene>
<name>SYL_MYCSK</name>
<reference key="1">
    <citation type="submission" date="2006-12" db="EMBL/GenBank/DDBJ databases">
        <title>Complete sequence of chromosome of Mycobacterium sp. KMS.</title>
        <authorList>
            <consortium name="US DOE Joint Genome Institute"/>
            <person name="Copeland A."/>
            <person name="Lucas S."/>
            <person name="Lapidus A."/>
            <person name="Barry K."/>
            <person name="Detter J.C."/>
            <person name="Glavina del Rio T."/>
            <person name="Hammon N."/>
            <person name="Israni S."/>
            <person name="Dalin E."/>
            <person name="Tice H."/>
            <person name="Pitluck S."/>
            <person name="Kiss H."/>
            <person name="Brettin T."/>
            <person name="Bruce D."/>
            <person name="Han C."/>
            <person name="Tapia R."/>
            <person name="Gilna P."/>
            <person name="Schmutz J."/>
            <person name="Larimer F."/>
            <person name="Land M."/>
            <person name="Hauser L."/>
            <person name="Kyrpides N."/>
            <person name="Mikhailova N."/>
            <person name="Miller C.D."/>
            <person name="Richardson P."/>
        </authorList>
    </citation>
    <scope>NUCLEOTIDE SEQUENCE [LARGE SCALE GENOMIC DNA]</scope>
    <source>
        <strain>KMS</strain>
    </source>
</reference>